<organism>
    <name type="scientific">Brevibacillus choshinensis</name>
    <dbReference type="NCBI Taxonomy" id="54911"/>
    <lineage>
        <taxon>Bacteria</taxon>
        <taxon>Bacillati</taxon>
        <taxon>Bacillota</taxon>
        <taxon>Bacilli</taxon>
        <taxon>Bacillales</taxon>
        <taxon>Paenibacillaceae</taxon>
        <taxon>Brevibacillus</taxon>
    </lineage>
</organism>
<dbReference type="EC" id="5.6.1.7" evidence="1"/>
<dbReference type="EMBL" id="AB038650">
    <property type="protein sequence ID" value="BAB85116.1"/>
    <property type="molecule type" value="Genomic_DNA"/>
</dbReference>
<dbReference type="SMR" id="Q8RU00"/>
<dbReference type="STRING" id="54911.AN963_28435"/>
<dbReference type="GO" id="GO:0005737">
    <property type="term" value="C:cytoplasm"/>
    <property type="evidence" value="ECO:0007669"/>
    <property type="project" value="UniProtKB-SubCell"/>
</dbReference>
<dbReference type="GO" id="GO:0005524">
    <property type="term" value="F:ATP binding"/>
    <property type="evidence" value="ECO:0007669"/>
    <property type="project" value="UniProtKB-UniRule"/>
</dbReference>
<dbReference type="GO" id="GO:0140662">
    <property type="term" value="F:ATP-dependent protein folding chaperone"/>
    <property type="evidence" value="ECO:0007669"/>
    <property type="project" value="InterPro"/>
</dbReference>
<dbReference type="GO" id="GO:0016853">
    <property type="term" value="F:isomerase activity"/>
    <property type="evidence" value="ECO:0007669"/>
    <property type="project" value="UniProtKB-KW"/>
</dbReference>
<dbReference type="GO" id="GO:0051082">
    <property type="term" value="F:unfolded protein binding"/>
    <property type="evidence" value="ECO:0007669"/>
    <property type="project" value="UniProtKB-UniRule"/>
</dbReference>
<dbReference type="GO" id="GO:0042026">
    <property type="term" value="P:protein refolding"/>
    <property type="evidence" value="ECO:0007669"/>
    <property type="project" value="UniProtKB-UniRule"/>
</dbReference>
<dbReference type="CDD" id="cd03344">
    <property type="entry name" value="GroEL"/>
    <property type="match status" value="1"/>
</dbReference>
<dbReference type="FunFam" id="3.50.7.10:FF:000001">
    <property type="entry name" value="60 kDa chaperonin"/>
    <property type="match status" value="1"/>
</dbReference>
<dbReference type="Gene3D" id="3.50.7.10">
    <property type="entry name" value="GroEL"/>
    <property type="match status" value="1"/>
</dbReference>
<dbReference type="Gene3D" id="1.10.560.10">
    <property type="entry name" value="GroEL-like equatorial domain"/>
    <property type="match status" value="1"/>
</dbReference>
<dbReference type="Gene3D" id="3.30.260.10">
    <property type="entry name" value="TCP-1-like chaperonin intermediate domain"/>
    <property type="match status" value="1"/>
</dbReference>
<dbReference type="HAMAP" id="MF_00600">
    <property type="entry name" value="CH60"/>
    <property type="match status" value="1"/>
</dbReference>
<dbReference type="InterPro" id="IPR018370">
    <property type="entry name" value="Chaperonin_Cpn60_CS"/>
</dbReference>
<dbReference type="InterPro" id="IPR001844">
    <property type="entry name" value="Cpn60/GroEL"/>
</dbReference>
<dbReference type="InterPro" id="IPR002423">
    <property type="entry name" value="Cpn60/GroEL/TCP-1"/>
</dbReference>
<dbReference type="InterPro" id="IPR027409">
    <property type="entry name" value="GroEL-like_apical_dom_sf"/>
</dbReference>
<dbReference type="InterPro" id="IPR027413">
    <property type="entry name" value="GROEL-like_equatorial_sf"/>
</dbReference>
<dbReference type="InterPro" id="IPR027410">
    <property type="entry name" value="TCP-1-like_intermed_sf"/>
</dbReference>
<dbReference type="NCBIfam" id="TIGR02348">
    <property type="entry name" value="GroEL"/>
    <property type="match status" value="1"/>
</dbReference>
<dbReference type="NCBIfam" id="NF000592">
    <property type="entry name" value="PRK00013.1"/>
    <property type="match status" value="1"/>
</dbReference>
<dbReference type="NCBIfam" id="NF009487">
    <property type="entry name" value="PRK12849.1"/>
    <property type="match status" value="1"/>
</dbReference>
<dbReference type="NCBIfam" id="NF009488">
    <property type="entry name" value="PRK12850.1"/>
    <property type="match status" value="1"/>
</dbReference>
<dbReference type="NCBIfam" id="NF009489">
    <property type="entry name" value="PRK12851.1"/>
    <property type="match status" value="1"/>
</dbReference>
<dbReference type="PANTHER" id="PTHR45633">
    <property type="entry name" value="60 KDA HEAT SHOCK PROTEIN, MITOCHONDRIAL"/>
    <property type="match status" value="1"/>
</dbReference>
<dbReference type="Pfam" id="PF00118">
    <property type="entry name" value="Cpn60_TCP1"/>
    <property type="match status" value="1"/>
</dbReference>
<dbReference type="PRINTS" id="PR00298">
    <property type="entry name" value="CHAPERONIN60"/>
</dbReference>
<dbReference type="SUPFAM" id="SSF52029">
    <property type="entry name" value="GroEL apical domain-like"/>
    <property type="match status" value="1"/>
</dbReference>
<dbReference type="SUPFAM" id="SSF48592">
    <property type="entry name" value="GroEL equatorial domain-like"/>
    <property type="match status" value="1"/>
</dbReference>
<dbReference type="SUPFAM" id="SSF54849">
    <property type="entry name" value="GroEL-intermediate domain like"/>
    <property type="match status" value="1"/>
</dbReference>
<dbReference type="PROSITE" id="PS00296">
    <property type="entry name" value="CHAPERONINS_CPN60"/>
    <property type="match status" value="1"/>
</dbReference>
<accession>Q8RU00</accession>
<evidence type="ECO:0000255" key="1">
    <source>
        <dbReference type="HAMAP-Rule" id="MF_00600"/>
    </source>
</evidence>
<name>CH60_BRECH</name>
<keyword id="KW-0067">ATP-binding</keyword>
<keyword id="KW-0143">Chaperone</keyword>
<keyword id="KW-0963">Cytoplasm</keyword>
<keyword id="KW-0413">Isomerase</keyword>
<keyword id="KW-0547">Nucleotide-binding</keyword>
<comment type="function">
    <text evidence="1">Together with its co-chaperonin GroES, plays an essential role in assisting protein folding. The GroEL-GroES system forms a nano-cage that allows encapsulation of the non-native substrate proteins and provides a physical environment optimized to promote and accelerate protein folding.</text>
</comment>
<comment type="catalytic activity">
    <reaction evidence="1">
        <text>ATP + H2O + a folded polypeptide = ADP + phosphate + an unfolded polypeptide.</text>
        <dbReference type="EC" id="5.6.1.7"/>
    </reaction>
</comment>
<comment type="subunit">
    <text evidence="1">Forms a cylinder of 14 subunits composed of two heptameric rings stacked back-to-back. Interacts with the co-chaperonin GroES.</text>
</comment>
<comment type="subcellular location">
    <subcellularLocation>
        <location evidence="1">Cytoplasm</location>
    </subcellularLocation>
</comment>
<comment type="similarity">
    <text evidence="1">Belongs to the chaperonin (HSP60) family.</text>
</comment>
<protein>
    <recommendedName>
        <fullName evidence="1">Chaperonin GroEL</fullName>
        <ecNumber evidence="1">5.6.1.7</ecNumber>
    </recommendedName>
    <alternativeName>
        <fullName evidence="1">60 kDa chaperonin</fullName>
    </alternativeName>
    <alternativeName>
        <fullName evidence="1">Chaperonin-60</fullName>
        <shortName evidence="1">Cpn60</shortName>
    </alternativeName>
</protein>
<feature type="chain" id="PRO_0000063301" description="Chaperonin GroEL">
    <location>
        <begin position="1"/>
        <end position="543"/>
    </location>
</feature>
<feature type="binding site" evidence="1">
    <location>
        <begin position="29"/>
        <end position="32"/>
    </location>
    <ligand>
        <name>ATP</name>
        <dbReference type="ChEBI" id="CHEBI:30616"/>
    </ligand>
</feature>
<feature type="binding site" evidence="1">
    <location>
        <begin position="86"/>
        <end position="90"/>
    </location>
    <ligand>
        <name>ATP</name>
        <dbReference type="ChEBI" id="CHEBI:30616"/>
    </ligand>
</feature>
<feature type="binding site" evidence="1">
    <location>
        <position position="413"/>
    </location>
    <ligand>
        <name>ATP</name>
        <dbReference type="ChEBI" id="CHEBI:30616"/>
    </ligand>
</feature>
<feature type="binding site" evidence="1">
    <location>
        <begin position="476"/>
        <end position="478"/>
    </location>
    <ligand>
        <name>ATP</name>
        <dbReference type="ChEBI" id="CHEBI:30616"/>
    </ligand>
</feature>
<feature type="binding site" evidence="1">
    <location>
        <position position="492"/>
    </location>
    <ligand>
        <name>ATP</name>
        <dbReference type="ChEBI" id="CHEBI:30616"/>
    </ligand>
</feature>
<proteinExistence type="inferred from homology"/>
<gene>
    <name evidence="1" type="primary">groEL</name>
    <name evidence="1" type="synonym">groL</name>
</gene>
<reference key="1">
    <citation type="journal article" date="2001" name="Biosci. Biotechnol. Biochem.">
        <title>Molecular cloning of groESL locus, and purification and characterization of chaperonins, GroEL and GroES, from Bacillus brevis.</title>
        <authorList>
            <person name="Tokunaga M."/>
            <person name="Shiraishi Y."/>
            <person name="Odachi M."/>
            <person name="Mizukami M."/>
            <person name="Tokunaga H."/>
            <person name="Philo J.S."/>
            <person name="Arakawa T."/>
            <person name="Ishibashi M."/>
            <person name="Tanaka R."/>
            <person name="Takagi H."/>
        </authorList>
    </citation>
    <scope>NUCLEOTIDE SEQUENCE [GENOMIC DNA]</scope>
    <source>
        <strain>HPD31</strain>
    </source>
</reference>
<sequence length="543" mass="57383">MAKQVKFSEDAPRSMLRGVETLPNAVKVTLGPKGRNVVLEKKFGSPLITNDGVTIPKEIELEDAYENMGAQLVKEVATKTNGIAGDGTTTATVLAAAMIREGLKNVAAGANPMVIRRGMEKAVGAAVEEIKSIAKPVENKSSIAQVAAISADDQEVGNLIAEAMEKVGKDGVITVEESKGFVTELEVVEGMQFDRGYASPYMITDTDKMEAVLNNPFILITDKKISNIQEVLPVLEQVVQSGKPLLIIAEDVEGEALATLVVNKLRGTFTAVAVKAPGFGDRRKAMLQDIAALTGGEVITEELGLDLKSTKLEQLGRAGKIVVTKENTTVVEGAGDKANIESRVAQIRQQIEDTTSDFDREKLQERLAKLAGGVAVIKVGAATETELKEKKLRIEDALNSTRAAVEEGIVPGGGTTLINAIKAVEGVKVEGEEAVGVHIVLRSLEEPVRQIAANAGLEGSVIVERLKKEPVGIGFNAATEEYVNMLEAGIVDAAKVTRSALSNAASVAAMFLTTEAVIADKPEENKAPMGMPDMGGMGGMGMM</sequence>